<organism>
    <name type="scientific">Schizosaccharomyces pombe (strain 972 / ATCC 24843)</name>
    <name type="common">Fission yeast</name>
    <dbReference type="NCBI Taxonomy" id="284812"/>
    <lineage>
        <taxon>Eukaryota</taxon>
        <taxon>Fungi</taxon>
        <taxon>Dikarya</taxon>
        <taxon>Ascomycota</taxon>
        <taxon>Taphrinomycotina</taxon>
        <taxon>Schizosaccharomycetes</taxon>
        <taxon>Schizosaccharomycetales</taxon>
        <taxon>Schizosaccharomycetaceae</taxon>
        <taxon>Schizosaccharomyces</taxon>
    </lineage>
</organism>
<proteinExistence type="evidence at protein level"/>
<keyword id="KW-0002">3D-structure</keyword>
<keyword id="KW-0046">Antibiotic resistance</keyword>
<keyword id="KW-0963">Cytoplasm</keyword>
<keyword id="KW-0206">Cytoskeleton</keyword>
<keyword id="KW-0342">GTP-binding</keyword>
<keyword id="KW-0460">Magnesium</keyword>
<keyword id="KW-0479">Metal-binding</keyword>
<keyword id="KW-0493">Microtubule</keyword>
<keyword id="KW-0547">Nucleotide-binding</keyword>
<keyword id="KW-1185">Reference proteome</keyword>
<evidence type="ECO:0000250" key="1">
    <source>
        <dbReference type="UniProtKB" id="P68363"/>
    </source>
</evidence>
<evidence type="ECO:0000250" key="2">
    <source>
        <dbReference type="UniProtKB" id="Q13509"/>
    </source>
</evidence>
<evidence type="ECO:0000256" key="3">
    <source>
        <dbReference type="SAM" id="MobiDB-lite"/>
    </source>
</evidence>
<evidence type="ECO:0000269" key="4">
    <source>
    </source>
</evidence>
<evidence type="ECO:0000269" key="5">
    <source>
    </source>
</evidence>
<evidence type="ECO:0000305" key="6"/>
<dbReference type="EMBL" id="M10347">
    <property type="protein sequence ID" value="AAA35352.1"/>
    <property type="molecule type" value="Genomic_DNA"/>
</dbReference>
<dbReference type="EMBL" id="CU329671">
    <property type="protein sequence ID" value="CAA21099.1"/>
    <property type="molecule type" value="Genomic_DNA"/>
</dbReference>
<dbReference type="EMBL" id="AF042827">
    <property type="protein sequence ID" value="AAC21454.1"/>
    <property type="molecule type" value="Genomic_DNA"/>
</dbReference>
<dbReference type="EMBL" id="AF042828">
    <property type="protein sequence ID" value="AAC21455.1"/>
    <property type="molecule type" value="Genomic_DNA"/>
</dbReference>
<dbReference type="PIR" id="A21649">
    <property type="entry name" value="A21649"/>
</dbReference>
<dbReference type="PIR" id="T40019">
    <property type="entry name" value="T40019"/>
</dbReference>
<dbReference type="PIR" id="T43624">
    <property type="entry name" value="T43624"/>
</dbReference>
<dbReference type="RefSeq" id="NP_596650.1">
    <property type="nucleotide sequence ID" value="NM_001022572.2"/>
</dbReference>
<dbReference type="PDB" id="5MJS">
    <property type="method" value="EM"/>
    <property type="resolution" value="4.60 A"/>
    <property type="chains" value="A/B/C/J=1-429"/>
</dbReference>
<dbReference type="PDB" id="6S8M">
    <property type="method" value="EM"/>
    <property type="resolution" value="4.50 A"/>
    <property type="chains" value="B=1-448"/>
</dbReference>
<dbReference type="PDBsum" id="5MJS"/>
<dbReference type="PDBsum" id="6S8M"/>
<dbReference type="EMDB" id="EMD-3522"/>
<dbReference type="EMDB" id="EMD-3527"/>
<dbReference type="SMR" id="P05219"/>
<dbReference type="BioGRID" id="277108">
    <property type="interactions" value="43"/>
</dbReference>
<dbReference type="DIP" id="DIP-46363N"/>
<dbReference type="FunCoup" id="P05219">
    <property type="interactions" value="142"/>
</dbReference>
<dbReference type="IntAct" id="P05219">
    <property type="interactions" value="2"/>
</dbReference>
<dbReference type="STRING" id="284812.P05219"/>
<dbReference type="iPTMnet" id="P05219"/>
<dbReference type="PaxDb" id="4896-SPBC26H8.07c.1"/>
<dbReference type="EnsemblFungi" id="SPBC26H8.07c.1">
    <property type="protein sequence ID" value="SPBC26H8.07c.1:pep"/>
    <property type="gene ID" value="SPBC26H8.07c"/>
</dbReference>
<dbReference type="GeneID" id="2540582"/>
<dbReference type="KEGG" id="spo:2540582"/>
<dbReference type="PomBase" id="SPBC26H8.07c">
    <property type="gene designation" value="nda3"/>
</dbReference>
<dbReference type="VEuPathDB" id="FungiDB:SPBC26H8.07c"/>
<dbReference type="eggNOG" id="KOG1375">
    <property type="taxonomic scope" value="Eukaryota"/>
</dbReference>
<dbReference type="HOGENOM" id="CLU_015718_1_1_1"/>
<dbReference type="InParanoid" id="P05219"/>
<dbReference type="OMA" id="WVPRSVN"/>
<dbReference type="PhylomeDB" id="P05219"/>
<dbReference type="PRO" id="PR:P05219"/>
<dbReference type="Proteomes" id="UP000002485">
    <property type="component" value="Chromosome II"/>
</dbReference>
<dbReference type="GO" id="GO:0000235">
    <property type="term" value="C:astral microtubule"/>
    <property type="evidence" value="ECO:0000303"/>
    <property type="project" value="PomBase"/>
</dbReference>
<dbReference type="GO" id="GO:0005737">
    <property type="term" value="C:cytoplasm"/>
    <property type="evidence" value="ECO:0000318"/>
    <property type="project" value="GO_Central"/>
</dbReference>
<dbReference type="GO" id="GO:0005881">
    <property type="term" value="C:cytoplasmic microtubule"/>
    <property type="evidence" value="ECO:0000315"/>
    <property type="project" value="PomBase"/>
</dbReference>
<dbReference type="GO" id="GO:0005829">
    <property type="term" value="C:cytosol"/>
    <property type="evidence" value="ECO:0007005"/>
    <property type="project" value="PomBase"/>
</dbReference>
<dbReference type="GO" id="GO:0005874">
    <property type="term" value="C:microtubule"/>
    <property type="evidence" value="ECO:0000318"/>
    <property type="project" value="GO_Central"/>
</dbReference>
<dbReference type="GO" id="GO:0005634">
    <property type="term" value="C:nucleus"/>
    <property type="evidence" value="ECO:0000305"/>
    <property type="project" value="PomBase"/>
</dbReference>
<dbReference type="GO" id="GO:0005876">
    <property type="term" value="C:spindle microtubule"/>
    <property type="evidence" value="ECO:0000314"/>
    <property type="project" value="PomBase"/>
</dbReference>
<dbReference type="GO" id="GO:0005525">
    <property type="term" value="F:GTP binding"/>
    <property type="evidence" value="ECO:0000318"/>
    <property type="project" value="GO_Central"/>
</dbReference>
<dbReference type="GO" id="GO:0003924">
    <property type="term" value="F:GTPase activity"/>
    <property type="evidence" value="ECO:0000255"/>
    <property type="project" value="PomBase"/>
</dbReference>
<dbReference type="GO" id="GO:0046872">
    <property type="term" value="F:metal ion binding"/>
    <property type="evidence" value="ECO:0007669"/>
    <property type="project" value="UniProtKB-KW"/>
</dbReference>
<dbReference type="GO" id="GO:0005200">
    <property type="term" value="F:structural constituent of cytoskeleton"/>
    <property type="evidence" value="ECO:0000318"/>
    <property type="project" value="GO_Central"/>
</dbReference>
<dbReference type="GO" id="GO:0031122">
    <property type="term" value="P:cytoplasmic microtubule organization"/>
    <property type="evidence" value="ECO:0000315"/>
    <property type="project" value="PomBase"/>
</dbReference>
<dbReference type="GO" id="GO:0048312">
    <property type="term" value="P:intracellular distribution of mitochondria"/>
    <property type="evidence" value="ECO:0000315"/>
    <property type="project" value="PomBase"/>
</dbReference>
<dbReference type="GO" id="GO:0000226">
    <property type="term" value="P:microtubule cytoskeleton organization"/>
    <property type="evidence" value="ECO:0000315"/>
    <property type="project" value="PomBase"/>
</dbReference>
<dbReference type="GO" id="GO:0000278">
    <property type="term" value="P:mitotic cell cycle"/>
    <property type="evidence" value="ECO:0000318"/>
    <property type="project" value="GO_Central"/>
</dbReference>
<dbReference type="GO" id="GO:0000022">
    <property type="term" value="P:mitotic spindle elongation"/>
    <property type="evidence" value="ECO:0000269"/>
    <property type="project" value="PomBase"/>
</dbReference>
<dbReference type="GO" id="GO:1903087">
    <property type="term" value="P:mitotic spindle pole body duplication"/>
    <property type="evidence" value="ECO:0000315"/>
    <property type="project" value="PomBase"/>
</dbReference>
<dbReference type="GO" id="GO:0098863">
    <property type="term" value="P:nuclear migration by microtubule mediated pushing forces"/>
    <property type="evidence" value="ECO:0000314"/>
    <property type="project" value="PomBase"/>
</dbReference>
<dbReference type="GO" id="GO:0046677">
    <property type="term" value="P:response to antibiotic"/>
    <property type="evidence" value="ECO:0007669"/>
    <property type="project" value="UniProtKB-KW"/>
</dbReference>
<dbReference type="CDD" id="cd02187">
    <property type="entry name" value="beta_tubulin"/>
    <property type="match status" value="1"/>
</dbReference>
<dbReference type="FunFam" id="1.10.287.600:FF:000002">
    <property type="entry name" value="Tubulin beta chain"/>
    <property type="match status" value="1"/>
</dbReference>
<dbReference type="FunFam" id="3.30.1330.20:FF:000002">
    <property type="entry name" value="Tubulin beta chain"/>
    <property type="match status" value="1"/>
</dbReference>
<dbReference type="FunFam" id="3.40.50.1440:FF:000006">
    <property type="entry name" value="Tubulin beta chain"/>
    <property type="match status" value="1"/>
</dbReference>
<dbReference type="Gene3D" id="1.10.287.600">
    <property type="entry name" value="Helix hairpin bin"/>
    <property type="match status" value="1"/>
</dbReference>
<dbReference type="Gene3D" id="3.30.1330.20">
    <property type="entry name" value="Tubulin/FtsZ, C-terminal domain"/>
    <property type="match status" value="1"/>
</dbReference>
<dbReference type="Gene3D" id="3.40.50.1440">
    <property type="entry name" value="Tubulin/FtsZ, GTPase domain"/>
    <property type="match status" value="1"/>
</dbReference>
<dbReference type="InterPro" id="IPR013838">
    <property type="entry name" value="Beta-tubulin_BS"/>
</dbReference>
<dbReference type="InterPro" id="IPR002453">
    <property type="entry name" value="Beta_tubulin"/>
</dbReference>
<dbReference type="InterPro" id="IPR008280">
    <property type="entry name" value="Tub_FtsZ_C"/>
</dbReference>
<dbReference type="InterPro" id="IPR000217">
    <property type="entry name" value="Tubulin"/>
</dbReference>
<dbReference type="InterPro" id="IPR037103">
    <property type="entry name" value="Tubulin/FtsZ-like_C"/>
</dbReference>
<dbReference type="InterPro" id="IPR018316">
    <property type="entry name" value="Tubulin/FtsZ_2-layer-sand-dom"/>
</dbReference>
<dbReference type="InterPro" id="IPR036525">
    <property type="entry name" value="Tubulin/FtsZ_GTPase_sf"/>
</dbReference>
<dbReference type="InterPro" id="IPR023123">
    <property type="entry name" value="Tubulin_C"/>
</dbReference>
<dbReference type="InterPro" id="IPR017975">
    <property type="entry name" value="Tubulin_CS"/>
</dbReference>
<dbReference type="InterPro" id="IPR003008">
    <property type="entry name" value="Tubulin_FtsZ_GTPase"/>
</dbReference>
<dbReference type="PANTHER" id="PTHR11588">
    <property type="entry name" value="TUBULIN"/>
    <property type="match status" value="1"/>
</dbReference>
<dbReference type="Pfam" id="PF00091">
    <property type="entry name" value="Tubulin"/>
    <property type="match status" value="1"/>
</dbReference>
<dbReference type="Pfam" id="PF03953">
    <property type="entry name" value="Tubulin_C"/>
    <property type="match status" value="1"/>
</dbReference>
<dbReference type="PRINTS" id="PR01163">
    <property type="entry name" value="BETATUBULIN"/>
</dbReference>
<dbReference type="PRINTS" id="PR01161">
    <property type="entry name" value="TUBULIN"/>
</dbReference>
<dbReference type="SMART" id="SM00864">
    <property type="entry name" value="Tubulin"/>
    <property type="match status" value="1"/>
</dbReference>
<dbReference type="SMART" id="SM00865">
    <property type="entry name" value="Tubulin_C"/>
    <property type="match status" value="1"/>
</dbReference>
<dbReference type="SUPFAM" id="SSF55307">
    <property type="entry name" value="Tubulin C-terminal domain-like"/>
    <property type="match status" value="1"/>
</dbReference>
<dbReference type="SUPFAM" id="SSF52490">
    <property type="entry name" value="Tubulin nucleotide-binding domain-like"/>
    <property type="match status" value="1"/>
</dbReference>
<dbReference type="PROSITE" id="PS00227">
    <property type="entry name" value="TUBULIN"/>
    <property type="match status" value="1"/>
</dbReference>
<dbReference type="PROSITE" id="PS00228">
    <property type="entry name" value="TUBULIN_B_AUTOREG"/>
    <property type="match status" value="1"/>
</dbReference>
<gene>
    <name type="primary">nda3</name>
    <name type="synonym">alp12</name>
    <name type="ORF">SPBC26H8.07c</name>
</gene>
<protein>
    <recommendedName>
        <fullName>Tubulin beta chain</fullName>
    </recommendedName>
    <alternativeName>
        <fullName>Beta-tubulin</fullName>
    </alternativeName>
</protein>
<sequence>MREIVHIQAGQCGNQVGAAFWSTIADEHGLDSAGIYHGTSEAQHERLNVYFNEAAGGKYVPRAVLVDLEPGTMDAVKSGKFGNLFRPDNIIYGQSGAGNIWAKGHYTEGAELADAVLDVVRREAEACDALQGFQLTHSLGGGTGSGMGTLLLSKIREEYPDRMMATFSVAPAPKSSDTVVEPYNATLSMHQLVENSDETFCIDNEALSSIFANTLKIKSPSYDDLNHLVSAVMAGVTTSFRFPGELNSDLRKLAVNMVPFPRLHFFMVGFAPLAAIGSSSFQAVSVPELTQQMFDANNMMVAADPRHGRYLTVAALFRGKVSMKEVDEQIRSVQTKNSAYFVEWIPDNVLKAVCSVPPKDLKMSATFIGNSTSIQEIFRRLGDQFSAMFRRKAFLHWYTGEGMDEMEFTEAESNMNDLVSEYQQYQEAGIDEGDEDYEIEEEKEPLEY</sequence>
<name>TBB_SCHPO</name>
<comment type="function">
    <text>Tubulin is the major constituent of microtubules, a cylinder consisting of laterally associated linear protofilaments composed of alpha- and beta-tubulin heterodimers. Microtubules grow by the addition of GTP-tubulin dimers to the microtubule end, where a stabilizing cap forms. Below the cap, tubulin dimers are in GDP-bound state, owing to GTPase activity of alpha-tubulin.</text>
</comment>
<comment type="cofactor">
    <cofactor evidence="1">
        <name>Mg(2+)</name>
        <dbReference type="ChEBI" id="CHEBI:18420"/>
    </cofactor>
</comment>
<comment type="subunit">
    <text>Dimer of alpha and beta chains. A typical microtubule is a hollow water-filled tube with an outer diameter of 25 nm and an inner diameter of 15 nM. Alpha-beta heterodimers associate head-to-tail to form protofilaments running lengthwise along the microtubule wall with the beta-tubulin subunit facing the microtubule plus end conferring a structural polarity. Microtubules usually have 13 protofilaments but different protofilament numbers can be found in some organisms and specialized cells.</text>
</comment>
<comment type="subcellular location">
    <subcellularLocation>
        <location>Cytoplasm</location>
        <location>Cytoskeleton</location>
    </subcellularLocation>
</comment>
<comment type="miscellaneous">
    <text>A cold-sensitive nda3 mutation reversibly blocks spindle formation and chromosome movement in mitosis.</text>
</comment>
<comment type="miscellaneous">
    <text>Rhizoxin, an antibiotic that exhibits potent anti-mitotic activity against most eukaryotic cells except for yeasts, binds to beta tubulin.</text>
</comment>
<comment type="similarity">
    <text evidence="6">Belongs to the tubulin family.</text>
</comment>
<feature type="chain" id="PRO_0000048430" description="Tubulin beta chain">
    <location>
        <begin position="1"/>
        <end position="448"/>
    </location>
</feature>
<feature type="region of interest" description="Disordered" evidence="3">
    <location>
        <begin position="429"/>
        <end position="448"/>
    </location>
</feature>
<feature type="binding site" evidence="2">
    <location>
        <position position="11"/>
    </location>
    <ligand>
        <name>GTP</name>
        <dbReference type="ChEBI" id="CHEBI:37565"/>
    </ligand>
</feature>
<feature type="binding site" evidence="1">
    <location>
        <position position="69"/>
    </location>
    <ligand>
        <name>GTP</name>
        <dbReference type="ChEBI" id="CHEBI:37565"/>
    </ligand>
</feature>
<feature type="binding site" evidence="1">
    <location>
        <position position="69"/>
    </location>
    <ligand>
        <name>Mg(2+)</name>
        <dbReference type="ChEBI" id="CHEBI:18420"/>
    </ligand>
</feature>
<feature type="binding site" evidence="2">
    <location>
        <position position="138"/>
    </location>
    <ligand>
        <name>GTP</name>
        <dbReference type="ChEBI" id="CHEBI:37565"/>
    </ligand>
</feature>
<feature type="binding site" evidence="2">
    <location>
        <position position="142"/>
    </location>
    <ligand>
        <name>GTP</name>
        <dbReference type="ChEBI" id="CHEBI:37565"/>
    </ligand>
</feature>
<feature type="binding site" evidence="2">
    <location>
        <position position="143"/>
    </location>
    <ligand>
        <name>GTP</name>
        <dbReference type="ChEBI" id="CHEBI:37565"/>
    </ligand>
</feature>
<feature type="binding site" evidence="2">
    <location>
        <position position="144"/>
    </location>
    <ligand>
        <name>GTP</name>
        <dbReference type="ChEBI" id="CHEBI:37565"/>
    </ligand>
</feature>
<feature type="binding site" evidence="2">
    <location>
        <position position="204"/>
    </location>
    <ligand>
        <name>GTP</name>
        <dbReference type="ChEBI" id="CHEBI:37565"/>
    </ligand>
</feature>
<feature type="binding site" evidence="2">
    <location>
        <position position="226"/>
    </location>
    <ligand>
        <name>GTP</name>
        <dbReference type="ChEBI" id="CHEBI:37565"/>
    </ligand>
</feature>
<feature type="mutagenesis site" description="Becomes sensitive to rhizoxin." evidence="4">
    <original>I</original>
    <variation>N</variation>
    <location>
        <position position="100"/>
    </location>
</feature>
<feature type="mutagenesis site" description="Temperature sensitive." evidence="5">
    <original>Y</original>
    <variation>H</variation>
    <location>
        <position position="422"/>
    </location>
</feature>
<feature type="sequence conflict" description="In Ref. 1; AAA35352." evidence="6" ref="1">
    <original>H</original>
    <variation>L</variation>
    <location>
        <position position="6"/>
    </location>
</feature>
<feature type="sequence conflict" description="In Ref. 1; AAA35352." evidence="6" ref="1">
    <original>D</original>
    <variation>V</variation>
    <location>
        <position position="114"/>
    </location>
</feature>
<feature type="sequence conflict" description="In Ref. 1; AAA35352." evidence="6" ref="1">
    <original>F</original>
    <variation>I</variation>
    <location>
        <position position="211"/>
    </location>
</feature>
<feature type="sequence conflict" description="In Ref. 1; AAA35352." evidence="6" ref="1">
    <original>K</original>
    <variation>N</variation>
    <location>
        <position position="392"/>
    </location>
</feature>
<feature type="sequence conflict" description="In Ref. 1; AAA35352." evidence="6" ref="1">
    <original>E</original>
    <variation>D</variation>
    <location>
        <position position="447"/>
    </location>
</feature>
<reference key="1">
    <citation type="journal article" date="1984" name="Cell">
        <title>The NDA3 gene of fission yeast encodes beta-tubulin: a cold-sensitive nda3 mutation reversibly blocks spindle formation and chromosome movement in mitosis.</title>
        <authorList>
            <person name="Hiraoka Y."/>
            <person name="Toda T."/>
            <person name="Yanagida M."/>
        </authorList>
    </citation>
    <scope>NUCLEOTIDE SEQUENCE [GENOMIC DNA]</scope>
    <scope>MUTAGENESIS OF ILE-100</scope>
</reference>
<reference key="2">
    <citation type="journal article" date="1998" name="Mol. Biol. Cell">
        <title>Identification of novel temperature-sensitive lethal alleles in essential beta-tubulin and nonessential alpha 2-tubulin genes as fission yeast polarity mutants.</title>
        <authorList>
            <person name="Radcliffe P."/>
            <person name="Hirata D."/>
            <person name="Childs D."/>
            <person name="Vardy L."/>
            <person name="Toda T."/>
        </authorList>
    </citation>
    <scope>NUCLEOTIDE SEQUENCE [GENOMIC DNA]</scope>
    <scope>MUTAGENESIS OF TYR-422</scope>
    <source>
        <strain>972 / ATCC 24843</strain>
    </source>
</reference>
<reference key="3">
    <citation type="journal article" date="2002" name="Nature">
        <title>The genome sequence of Schizosaccharomyces pombe.</title>
        <authorList>
            <person name="Wood V."/>
            <person name="Gwilliam R."/>
            <person name="Rajandream M.A."/>
            <person name="Lyne M.H."/>
            <person name="Lyne R."/>
            <person name="Stewart A."/>
            <person name="Sgouros J.G."/>
            <person name="Peat N."/>
            <person name="Hayles J."/>
            <person name="Baker S.G."/>
            <person name="Basham D."/>
            <person name="Bowman S."/>
            <person name="Brooks K."/>
            <person name="Brown D."/>
            <person name="Brown S."/>
            <person name="Chillingworth T."/>
            <person name="Churcher C.M."/>
            <person name="Collins M."/>
            <person name="Connor R."/>
            <person name="Cronin A."/>
            <person name="Davis P."/>
            <person name="Feltwell T."/>
            <person name="Fraser A."/>
            <person name="Gentles S."/>
            <person name="Goble A."/>
            <person name="Hamlin N."/>
            <person name="Harris D.E."/>
            <person name="Hidalgo J."/>
            <person name="Hodgson G."/>
            <person name="Holroyd S."/>
            <person name="Hornsby T."/>
            <person name="Howarth S."/>
            <person name="Huckle E.J."/>
            <person name="Hunt S."/>
            <person name="Jagels K."/>
            <person name="James K.D."/>
            <person name="Jones L."/>
            <person name="Jones M."/>
            <person name="Leather S."/>
            <person name="McDonald S."/>
            <person name="McLean J."/>
            <person name="Mooney P."/>
            <person name="Moule S."/>
            <person name="Mungall K.L."/>
            <person name="Murphy L.D."/>
            <person name="Niblett D."/>
            <person name="Odell C."/>
            <person name="Oliver K."/>
            <person name="O'Neil S."/>
            <person name="Pearson D."/>
            <person name="Quail M.A."/>
            <person name="Rabbinowitsch E."/>
            <person name="Rutherford K.M."/>
            <person name="Rutter S."/>
            <person name="Saunders D."/>
            <person name="Seeger K."/>
            <person name="Sharp S."/>
            <person name="Skelton J."/>
            <person name="Simmonds M.N."/>
            <person name="Squares R."/>
            <person name="Squares S."/>
            <person name="Stevens K."/>
            <person name="Taylor K."/>
            <person name="Taylor R.G."/>
            <person name="Tivey A."/>
            <person name="Walsh S.V."/>
            <person name="Warren T."/>
            <person name="Whitehead S."/>
            <person name="Woodward J.R."/>
            <person name="Volckaert G."/>
            <person name="Aert R."/>
            <person name="Robben J."/>
            <person name="Grymonprez B."/>
            <person name="Weltjens I."/>
            <person name="Vanstreels E."/>
            <person name="Rieger M."/>
            <person name="Schaefer M."/>
            <person name="Mueller-Auer S."/>
            <person name="Gabel C."/>
            <person name="Fuchs M."/>
            <person name="Duesterhoeft A."/>
            <person name="Fritzc C."/>
            <person name="Holzer E."/>
            <person name="Moestl D."/>
            <person name="Hilbert H."/>
            <person name="Borzym K."/>
            <person name="Langer I."/>
            <person name="Beck A."/>
            <person name="Lehrach H."/>
            <person name="Reinhardt R."/>
            <person name="Pohl T.M."/>
            <person name="Eger P."/>
            <person name="Zimmermann W."/>
            <person name="Wedler H."/>
            <person name="Wambutt R."/>
            <person name="Purnelle B."/>
            <person name="Goffeau A."/>
            <person name="Cadieu E."/>
            <person name="Dreano S."/>
            <person name="Gloux S."/>
            <person name="Lelaure V."/>
            <person name="Mottier S."/>
            <person name="Galibert F."/>
            <person name="Aves S.J."/>
            <person name="Xiang Z."/>
            <person name="Hunt C."/>
            <person name="Moore K."/>
            <person name="Hurst S.M."/>
            <person name="Lucas M."/>
            <person name="Rochet M."/>
            <person name="Gaillardin C."/>
            <person name="Tallada V.A."/>
            <person name="Garzon A."/>
            <person name="Thode G."/>
            <person name="Daga R.R."/>
            <person name="Cruzado L."/>
            <person name="Jimenez J."/>
            <person name="Sanchez M."/>
            <person name="del Rey F."/>
            <person name="Benito J."/>
            <person name="Dominguez A."/>
            <person name="Revuelta J.L."/>
            <person name="Moreno S."/>
            <person name="Armstrong J."/>
            <person name="Forsburg S.L."/>
            <person name="Cerutti L."/>
            <person name="Lowe T."/>
            <person name="McCombie W.R."/>
            <person name="Paulsen I."/>
            <person name="Potashkin J."/>
            <person name="Shpakovski G.V."/>
            <person name="Ussery D."/>
            <person name="Barrell B.G."/>
            <person name="Nurse P."/>
        </authorList>
    </citation>
    <scope>NUCLEOTIDE SEQUENCE [LARGE SCALE GENOMIC DNA]</scope>
    <source>
        <strain>972 / ATCC 24843</strain>
    </source>
</reference>
<reference key="4">
    <citation type="journal article" date="1990" name="Mol. Gen. Genet.">
        <title>Molecular basis for determining the sensitivity of eucaryotes to the antimitotic drug rhizoxin.</title>
        <authorList>
            <person name="Takahashi M."/>
            <person name="Matsumoto S."/>
            <person name="Iwasaki S."/>
            <person name="Yahara I."/>
        </authorList>
    </citation>
    <scope>ANTIBIOTIC RESISTANCE TO RHIZOXIN</scope>
</reference>
<accession>P05219</accession>
<accession>O74206</accession>
<accession>Q9UQZ0</accession>